<keyword id="KW-0028">Amino-acid biosynthesis</keyword>
<keyword id="KW-0067">ATP-binding</keyword>
<keyword id="KW-0963">Cytoplasm</keyword>
<keyword id="KW-0418">Kinase</keyword>
<keyword id="KW-0547">Nucleotide-binding</keyword>
<keyword id="KW-0641">Proline biosynthesis</keyword>
<keyword id="KW-1185">Reference proteome</keyword>
<keyword id="KW-0808">Transferase</keyword>
<dbReference type="EC" id="2.7.2.11" evidence="1"/>
<dbReference type="EMBL" id="CP000038">
    <property type="protein sequence ID" value="AAZ87067.1"/>
    <property type="molecule type" value="Genomic_DNA"/>
</dbReference>
<dbReference type="RefSeq" id="WP_001285288.1">
    <property type="nucleotide sequence ID" value="NC_007384.1"/>
</dbReference>
<dbReference type="SMR" id="Q3Z595"/>
<dbReference type="GeneID" id="93777151"/>
<dbReference type="KEGG" id="ssn:SSON_0284"/>
<dbReference type="HOGENOM" id="CLU_025400_2_0_6"/>
<dbReference type="UniPathway" id="UPA00098">
    <property type="reaction ID" value="UER00359"/>
</dbReference>
<dbReference type="Proteomes" id="UP000002529">
    <property type="component" value="Chromosome"/>
</dbReference>
<dbReference type="GO" id="GO:0005829">
    <property type="term" value="C:cytosol"/>
    <property type="evidence" value="ECO:0007669"/>
    <property type="project" value="TreeGrafter"/>
</dbReference>
<dbReference type="GO" id="GO:0005524">
    <property type="term" value="F:ATP binding"/>
    <property type="evidence" value="ECO:0007669"/>
    <property type="project" value="UniProtKB-KW"/>
</dbReference>
<dbReference type="GO" id="GO:0004349">
    <property type="term" value="F:glutamate 5-kinase activity"/>
    <property type="evidence" value="ECO:0007669"/>
    <property type="project" value="UniProtKB-UniRule"/>
</dbReference>
<dbReference type="GO" id="GO:0003723">
    <property type="term" value="F:RNA binding"/>
    <property type="evidence" value="ECO:0007669"/>
    <property type="project" value="InterPro"/>
</dbReference>
<dbReference type="GO" id="GO:0055129">
    <property type="term" value="P:L-proline biosynthetic process"/>
    <property type="evidence" value="ECO:0007669"/>
    <property type="project" value="UniProtKB-UniRule"/>
</dbReference>
<dbReference type="CDD" id="cd04242">
    <property type="entry name" value="AAK_G5K_ProB"/>
    <property type="match status" value="1"/>
</dbReference>
<dbReference type="CDD" id="cd21157">
    <property type="entry name" value="PUA_G5K"/>
    <property type="match status" value="1"/>
</dbReference>
<dbReference type="FunFam" id="2.30.130.10:FF:000003">
    <property type="entry name" value="Glutamate 5-kinase"/>
    <property type="match status" value="1"/>
</dbReference>
<dbReference type="FunFam" id="3.40.1160.10:FF:000006">
    <property type="entry name" value="Glutamate 5-kinase"/>
    <property type="match status" value="1"/>
</dbReference>
<dbReference type="Gene3D" id="3.40.1160.10">
    <property type="entry name" value="Acetylglutamate kinase-like"/>
    <property type="match status" value="2"/>
</dbReference>
<dbReference type="Gene3D" id="2.30.130.10">
    <property type="entry name" value="PUA domain"/>
    <property type="match status" value="1"/>
</dbReference>
<dbReference type="HAMAP" id="MF_00456">
    <property type="entry name" value="ProB"/>
    <property type="match status" value="1"/>
</dbReference>
<dbReference type="InterPro" id="IPR036393">
    <property type="entry name" value="AceGlu_kinase-like_sf"/>
</dbReference>
<dbReference type="InterPro" id="IPR001048">
    <property type="entry name" value="Asp/Glu/Uridylate_kinase"/>
</dbReference>
<dbReference type="InterPro" id="IPR041739">
    <property type="entry name" value="G5K_ProB"/>
</dbReference>
<dbReference type="InterPro" id="IPR001057">
    <property type="entry name" value="Glu/AcGlu_kinase"/>
</dbReference>
<dbReference type="InterPro" id="IPR011529">
    <property type="entry name" value="Glu_5kinase"/>
</dbReference>
<dbReference type="InterPro" id="IPR005715">
    <property type="entry name" value="Glu_5kinase/COase_Synthase"/>
</dbReference>
<dbReference type="InterPro" id="IPR019797">
    <property type="entry name" value="Glutamate_5-kinase_CS"/>
</dbReference>
<dbReference type="InterPro" id="IPR002478">
    <property type="entry name" value="PUA"/>
</dbReference>
<dbReference type="InterPro" id="IPR015947">
    <property type="entry name" value="PUA-like_sf"/>
</dbReference>
<dbReference type="InterPro" id="IPR036974">
    <property type="entry name" value="PUA_sf"/>
</dbReference>
<dbReference type="NCBIfam" id="TIGR01027">
    <property type="entry name" value="proB"/>
    <property type="match status" value="1"/>
</dbReference>
<dbReference type="PANTHER" id="PTHR43654">
    <property type="entry name" value="GLUTAMATE 5-KINASE"/>
    <property type="match status" value="1"/>
</dbReference>
<dbReference type="PANTHER" id="PTHR43654:SF1">
    <property type="entry name" value="ISOPENTENYL PHOSPHATE KINASE"/>
    <property type="match status" value="1"/>
</dbReference>
<dbReference type="Pfam" id="PF00696">
    <property type="entry name" value="AA_kinase"/>
    <property type="match status" value="1"/>
</dbReference>
<dbReference type="Pfam" id="PF01472">
    <property type="entry name" value="PUA"/>
    <property type="match status" value="1"/>
</dbReference>
<dbReference type="PIRSF" id="PIRSF000729">
    <property type="entry name" value="GK"/>
    <property type="match status" value="1"/>
</dbReference>
<dbReference type="PRINTS" id="PR00474">
    <property type="entry name" value="GLU5KINASE"/>
</dbReference>
<dbReference type="SMART" id="SM00359">
    <property type="entry name" value="PUA"/>
    <property type="match status" value="1"/>
</dbReference>
<dbReference type="SUPFAM" id="SSF53633">
    <property type="entry name" value="Carbamate kinase-like"/>
    <property type="match status" value="1"/>
</dbReference>
<dbReference type="SUPFAM" id="SSF88697">
    <property type="entry name" value="PUA domain-like"/>
    <property type="match status" value="1"/>
</dbReference>
<dbReference type="PROSITE" id="PS00902">
    <property type="entry name" value="GLUTAMATE_5_KINASE"/>
    <property type="match status" value="1"/>
</dbReference>
<dbReference type="PROSITE" id="PS50890">
    <property type="entry name" value="PUA"/>
    <property type="match status" value="1"/>
</dbReference>
<sequence>MSDSQTLVVKLGTSVLTGGSRRLNRAHIVELVRQCAQLHAAGHRIVIVTSGAIAAGREHLGYPELPATIASKQLLAAVGQSRLIQLWEQLFSIYGIHVGQMLLTRADMEDRERFLNARDTLRALLDNNIVPVINENDAVATAEIKVGDNDNLSALAAILAGADKLLLLTDQKGLYTADPRSNPQAELIKDVYGIDDALRAIAGDSVSGLGTGGMSTKLQAADVACRAGIDTIIAAGSKPGVIGDVMEGISVGTLFHAQATPLENRKRWIFGAPPAGEITVDEGATAAILERGSSLLPKGIKSVTGNFSRGEVIRICNLEGRDIAHGVSRYNSDALRRIAGHHSQEIDAILGYEYGPVAVHRDDMITR</sequence>
<evidence type="ECO:0000255" key="1">
    <source>
        <dbReference type="HAMAP-Rule" id="MF_00456"/>
    </source>
</evidence>
<accession>Q3Z595</accession>
<organism>
    <name type="scientific">Shigella sonnei (strain Ss046)</name>
    <dbReference type="NCBI Taxonomy" id="300269"/>
    <lineage>
        <taxon>Bacteria</taxon>
        <taxon>Pseudomonadati</taxon>
        <taxon>Pseudomonadota</taxon>
        <taxon>Gammaproteobacteria</taxon>
        <taxon>Enterobacterales</taxon>
        <taxon>Enterobacteriaceae</taxon>
        <taxon>Shigella</taxon>
    </lineage>
</organism>
<gene>
    <name evidence="1" type="primary">proB</name>
    <name type="ordered locus">SSON_0284</name>
</gene>
<reference key="1">
    <citation type="journal article" date="2005" name="Nucleic Acids Res.">
        <title>Genome dynamics and diversity of Shigella species, the etiologic agents of bacillary dysentery.</title>
        <authorList>
            <person name="Yang F."/>
            <person name="Yang J."/>
            <person name="Zhang X."/>
            <person name="Chen L."/>
            <person name="Jiang Y."/>
            <person name="Yan Y."/>
            <person name="Tang X."/>
            <person name="Wang J."/>
            <person name="Xiong Z."/>
            <person name="Dong J."/>
            <person name="Xue Y."/>
            <person name="Zhu Y."/>
            <person name="Xu X."/>
            <person name="Sun L."/>
            <person name="Chen S."/>
            <person name="Nie H."/>
            <person name="Peng J."/>
            <person name="Xu J."/>
            <person name="Wang Y."/>
            <person name="Yuan Z."/>
            <person name="Wen Y."/>
            <person name="Yao Z."/>
            <person name="Shen Y."/>
            <person name="Qiang B."/>
            <person name="Hou Y."/>
            <person name="Yu J."/>
            <person name="Jin Q."/>
        </authorList>
    </citation>
    <scope>NUCLEOTIDE SEQUENCE [LARGE SCALE GENOMIC DNA]</scope>
    <source>
        <strain>Ss046</strain>
    </source>
</reference>
<comment type="function">
    <text evidence="1">Catalyzes the transfer of a phosphate group to glutamate to form L-glutamate 5-phosphate.</text>
</comment>
<comment type="catalytic activity">
    <reaction evidence="1">
        <text>L-glutamate + ATP = L-glutamyl 5-phosphate + ADP</text>
        <dbReference type="Rhea" id="RHEA:14877"/>
        <dbReference type="ChEBI" id="CHEBI:29985"/>
        <dbReference type="ChEBI" id="CHEBI:30616"/>
        <dbReference type="ChEBI" id="CHEBI:58274"/>
        <dbReference type="ChEBI" id="CHEBI:456216"/>
        <dbReference type="EC" id="2.7.2.11"/>
    </reaction>
</comment>
<comment type="pathway">
    <text evidence="1">Amino-acid biosynthesis; L-proline biosynthesis; L-glutamate 5-semialdehyde from L-glutamate: step 1/2.</text>
</comment>
<comment type="subcellular location">
    <subcellularLocation>
        <location evidence="1">Cytoplasm</location>
    </subcellularLocation>
</comment>
<comment type="similarity">
    <text evidence="1">Belongs to the glutamate 5-kinase family.</text>
</comment>
<protein>
    <recommendedName>
        <fullName evidence="1">Glutamate 5-kinase</fullName>
        <ecNumber evidence="1">2.7.2.11</ecNumber>
    </recommendedName>
    <alternativeName>
        <fullName evidence="1">Gamma-glutamyl kinase</fullName>
        <shortName evidence="1">GK</shortName>
    </alternativeName>
</protein>
<name>PROB_SHISS</name>
<proteinExistence type="inferred from homology"/>
<feature type="chain" id="PRO_0000230067" description="Glutamate 5-kinase">
    <location>
        <begin position="1"/>
        <end position="367"/>
    </location>
</feature>
<feature type="domain" description="PUA" evidence="1">
    <location>
        <begin position="275"/>
        <end position="353"/>
    </location>
</feature>
<feature type="binding site" evidence="1">
    <location>
        <position position="10"/>
    </location>
    <ligand>
        <name>ATP</name>
        <dbReference type="ChEBI" id="CHEBI:30616"/>
    </ligand>
</feature>
<feature type="binding site" evidence="1">
    <location>
        <position position="50"/>
    </location>
    <ligand>
        <name>substrate</name>
    </ligand>
</feature>
<feature type="binding site" evidence="1">
    <location>
        <position position="137"/>
    </location>
    <ligand>
        <name>substrate</name>
    </ligand>
</feature>
<feature type="binding site" evidence="1">
    <location>
        <position position="149"/>
    </location>
    <ligand>
        <name>substrate</name>
    </ligand>
</feature>
<feature type="binding site" evidence="1">
    <location>
        <begin position="169"/>
        <end position="170"/>
    </location>
    <ligand>
        <name>ATP</name>
        <dbReference type="ChEBI" id="CHEBI:30616"/>
    </ligand>
</feature>
<feature type="binding site" evidence="1">
    <location>
        <begin position="211"/>
        <end position="217"/>
    </location>
    <ligand>
        <name>ATP</name>
        <dbReference type="ChEBI" id="CHEBI:30616"/>
    </ligand>
</feature>